<dbReference type="EMBL" id="AL049866">
    <property type="protein sequence ID" value="CAB88274.1"/>
    <property type="molecule type" value="Genomic_DNA"/>
</dbReference>
<dbReference type="EMBL" id="AL732461">
    <property type="status" value="NOT_ANNOTATED_CDS"/>
    <property type="molecule type" value="Genomic_DNA"/>
</dbReference>
<dbReference type="EMBL" id="BC119509">
    <property type="protein sequence ID" value="AAI19510.1"/>
    <property type="molecule type" value="mRNA"/>
</dbReference>
<dbReference type="CCDS" id="CCDS30198.1"/>
<dbReference type="RefSeq" id="NP_113681.1">
    <property type="nucleotide sequence ID" value="NM_031493.1"/>
</dbReference>
<dbReference type="SMR" id="Q9JJR2"/>
<dbReference type="FunCoup" id="Q9JJR2">
    <property type="interactions" value="11"/>
</dbReference>
<dbReference type="STRING" id="10090.ENSMUSP00000085796"/>
<dbReference type="iPTMnet" id="Q9JJR2"/>
<dbReference type="PhosphoSitePlus" id="Q9JJR2"/>
<dbReference type="jPOST" id="Q9JJR2"/>
<dbReference type="PaxDb" id="10090-ENSMUSP00000110147"/>
<dbReference type="DNASU" id="27084"/>
<dbReference type="Ensembl" id="ENSMUST00000088450.4">
    <property type="protein sequence ID" value="ENSMUSP00000085796.4"/>
    <property type="gene ID" value="ENSMUSG00000067764.12"/>
</dbReference>
<dbReference type="GeneID" id="27084"/>
<dbReference type="KEGG" id="mmu:27084"/>
<dbReference type="UCSC" id="uc009tlo.1">
    <property type="organism name" value="mouse"/>
</dbReference>
<dbReference type="AGR" id="MGI:1350981"/>
<dbReference type="CTD" id="27084"/>
<dbReference type="MGI" id="MGI:1350981">
    <property type="gene designation" value="Xlr5c"/>
</dbReference>
<dbReference type="VEuPathDB" id="HostDB:ENSMUSG00000067764"/>
<dbReference type="GeneTree" id="ENSGT00390000000062"/>
<dbReference type="InParanoid" id="Q9JJR2"/>
<dbReference type="OrthoDB" id="9585885at2759"/>
<dbReference type="BioGRID-ORCS" id="27084">
    <property type="hits" value="3 hits in 23 CRISPR screens"/>
</dbReference>
<dbReference type="PRO" id="PR:Q9JJR2"/>
<dbReference type="Proteomes" id="UP000000589">
    <property type="component" value="Chromosome X"/>
</dbReference>
<dbReference type="RNAct" id="Q9JJR2">
    <property type="molecule type" value="protein"/>
</dbReference>
<dbReference type="Bgee" id="ENSMUSG00000067764">
    <property type="expression patterns" value="Expressed in animal zygote and 19 other cell types or tissues"/>
</dbReference>
<dbReference type="ExpressionAtlas" id="Q9JJR2">
    <property type="expression patterns" value="baseline and differential"/>
</dbReference>
<dbReference type="GO" id="GO:0005694">
    <property type="term" value="C:chromosome"/>
    <property type="evidence" value="ECO:0000314"/>
    <property type="project" value="UniProtKB"/>
</dbReference>
<dbReference type="GO" id="GO:0005634">
    <property type="term" value="C:nucleus"/>
    <property type="evidence" value="ECO:0000314"/>
    <property type="project" value="UniProtKB"/>
</dbReference>
<dbReference type="InterPro" id="IPR051443">
    <property type="entry name" value="XLR/SYCP3"/>
</dbReference>
<dbReference type="InterPro" id="IPR006888">
    <property type="entry name" value="XLR/SYCP3/FAM9_dom"/>
</dbReference>
<dbReference type="PANTHER" id="PTHR19368:SF9">
    <property type="entry name" value="X-LINKED LYMPHOCYTE-REGULATED 5A-RELATED"/>
    <property type="match status" value="1"/>
</dbReference>
<dbReference type="PANTHER" id="PTHR19368">
    <property type="entry name" value="XLR/SCP3/FAM9"/>
    <property type="match status" value="1"/>
</dbReference>
<dbReference type="Pfam" id="PF04803">
    <property type="entry name" value="Cor1"/>
    <property type="match status" value="1"/>
</dbReference>
<comment type="subcellular location">
    <subcellularLocation>
        <location evidence="3">Nucleus</location>
    </subcellularLocation>
    <subcellularLocation>
        <location evidence="3">Chromosome</location>
    </subcellularLocation>
    <text evidence="3">May localize to synaptonemal complexes in meiotic spermatocytes.</text>
</comment>
<comment type="tissue specificity">
    <text evidence="3">Expressed in testis (at protein level). Also expressed in ovary. Not detected in other tissues tested.</text>
</comment>
<comment type="developmental stage">
    <text evidence="3">Detected in testis from 1 day postpartum (dpp) onwards (at protein level). Expression increases through to 28 dpp and remains high thereafter (at protein level). Highly expressed in spermatocytes at leptotene and pachytene stages of meiosis.</text>
</comment>
<comment type="similarity">
    <text evidence="5">Belongs to the XLR/SYCP3 family.</text>
</comment>
<proteinExistence type="evidence at protein level"/>
<protein>
    <recommendedName>
        <fullName evidence="4">X-linked lymphocyte-regulated protein 5C</fullName>
    </recommendedName>
</protein>
<evidence type="ECO:0000255" key="1"/>
<evidence type="ECO:0000256" key="2">
    <source>
        <dbReference type="SAM" id="MobiDB-lite"/>
    </source>
</evidence>
<evidence type="ECO:0000269" key="3">
    <source>
    </source>
</evidence>
<evidence type="ECO:0000303" key="4">
    <source>
    </source>
</evidence>
<evidence type="ECO:0000305" key="5"/>
<evidence type="ECO:0000312" key="6">
    <source>
        <dbReference type="EMBL" id="AAI19510.1"/>
    </source>
</evidence>
<evidence type="ECO:0000312" key="7">
    <source>
        <dbReference type="EMBL" id="AL732461"/>
    </source>
</evidence>
<evidence type="ECO:0000312" key="8">
    <source>
        <dbReference type="EMBL" id="CAB88274.1"/>
    </source>
</evidence>
<evidence type="ECO:0000312" key="9">
    <source>
        <dbReference type="MGI" id="MGI:1350981"/>
    </source>
</evidence>
<feature type="chain" id="PRO_0000443090" description="X-linked lymphocyte-regulated protein 5C">
    <location>
        <begin position="1"/>
        <end position="179"/>
    </location>
</feature>
<feature type="region of interest" description="Disordered" evidence="2">
    <location>
        <begin position="1"/>
        <end position="75"/>
    </location>
</feature>
<feature type="coiled-coil region" evidence="1">
    <location>
        <begin position="146"/>
        <end position="175"/>
    </location>
</feature>
<feature type="compositionally biased region" description="Basic and acidic residues" evidence="2">
    <location>
        <begin position="1"/>
        <end position="11"/>
    </location>
</feature>
<feature type="compositionally biased region" description="Low complexity" evidence="2">
    <location>
        <begin position="42"/>
        <end position="53"/>
    </location>
</feature>
<feature type="compositionally biased region" description="Basic and acidic residues" evidence="2">
    <location>
        <begin position="56"/>
        <end position="75"/>
    </location>
</feature>
<sequence length="179" mass="20702">MSNKEQKDMKKSGKHQRVHKTLPSDDFKNSDAVNPADKPAVGTSGMGSHSSGSDMQEAREPVQKKMQDFKGDDGTGLLMEKRKQFEEDVNASFRSLNENLQSILKAQQNSRQELKSLYCERFGSVYHNWLVEMDRTRDQEEYFSFITQQQMKILQTAIEDHETKLKNAKDMCDTFLKVW</sequence>
<keyword id="KW-0158">Chromosome</keyword>
<keyword id="KW-0175">Coiled coil</keyword>
<keyword id="KW-0539">Nucleus</keyword>
<keyword id="KW-1185">Reference proteome</keyword>
<gene>
    <name evidence="4 9" type="primary">Xlr5c</name>
    <name evidence="9" type="synonym">Xlr5</name>
</gene>
<accession>Q9JJR2</accession>
<name>XLR5C_MOUSE</name>
<organism evidence="8">
    <name type="scientific">Mus musculus</name>
    <name type="common">Mouse</name>
    <dbReference type="NCBI Taxonomy" id="10090"/>
    <lineage>
        <taxon>Eukaryota</taxon>
        <taxon>Metazoa</taxon>
        <taxon>Chordata</taxon>
        <taxon>Craniata</taxon>
        <taxon>Vertebrata</taxon>
        <taxon>Euteleostomi</taxon>
        <taxon>Mammalia</taxon>
        <taxon>Eutheria</taxon>
        <taxon>Euarchontoglires</taxon>
        <taxon>Glires</taxon>
        <taxon>Rodentia</taxon>
        <taxon>Myomorpha</taxon>
        <taxon>Muroidea</taxon>
        <taxon>Muridae</taxon>
        <taxon>Murinae</taxon>
        <taxon>Mus</taxon>
        <taxon>Mus</taxon>
    </lineage>
</organism>
<reference evidence="8" key="1">
    <citation type="journal article" date="2000" name="Genome Res.">
        <title>Comparative genome sequence analysis of the Bpa/Str region in mouse and man.</title>
        <authorList>
            <person name="Mallon A.-M."/>
            <person name="Platzer M."/>
            <person name="Bate R."/>
            <person name="Gloeckner G."/>
            <person name="Botcherby M.R.M."/>
            <person name="Nordsiek G."/>
            <person name="Strivens M.A."/>
            <person name="Kioschis P."/>
            <person name="Dangel A."/>
            <person name="Cunningham D."/>
            <person name="Straw R.N.A."/>
            <person name="Weston P."/>
            <person name="Gilbert M."/>
            <person name="Fernando S."/>
            <person name="Goodall K."/>
            <person name="Hunter G."/>
            <person name="Greystrong J.S."/>
            <person name="Clarke D."/>
            <person name="Kimberley C."/>
            <person name="Goerdes M."/>
            <person name="Blechschmidt K."/>
            <person name="Rump A."/>
            <person name="Hinzmann B."/>
            <person name="Mundy C.R."/>
            <person name="Miller W."/>
            <person name="Poustka A."/>
            <person name="Herman G.E."/>
            <person name="Rhodes M."/>
            <person name="Denny P."/>
            <person name="Rosenthal A."/>
            <person name="Brown S.D.M."/>
        </authorList>
    </citation>
    <scope>NUCLEOTIDE SEQUENCE [LARGE SCALE GENOMIC DNA]</scope>
    <source>
        <strain evidence="8">129/Sv</strain>
    </source>
</reference>
<reference evidence="7" key="2">
    <citation type="journal article" date="2009" name="PLoS Biol.">
        <title>Lineage-specific biology revealed by a finished genome assembly of the mouse.</title>
        <authorList>
            <person name="Church D.M."/>
            <person name="Goodstadt L."/>
            <person name="Hillier L.W."/>
            <person name="Zody M.C."/>
            <person name="Goldstein S."/>
            <person name="She X."/>
            <person name="Bult C.J."/>
            <person name="Agarwala R."/>
            <person name="Cherry J.L."/>
            <person name="DiCuccio M."/>
            <person name="Hlavina W."/>
            <person name="Kapustin Y."/>
            <person name="Meric P."/>
            <person name="Maglott D."/>
            <person name="Birtle Z."/>
            <person name="Marques A.C."/>
            <person name="Graves T."/>
            <person name="Zhou S."/>
            <person name="Teague B."/>
            <person name="Potamousis K."/>
            <person name="Churas C."/>
            <person name="Place M."/>
            <person name="Herschleb J."/>
            <person name="Runnheim R."/>
            <person name="Forrest D."/>
            <person name="Amos-Landgraf J."/>
            <person name="Schwartz D.C."/>
            <person name="Cheng Z."/>
            <person name="Lindblad-Toh K."/>
            <person name="Eichler E.E."/>
            <person name="Ponting C.P."/>
        </authorList>
    </citation>
    <scope>NUCLEOTIDE SEQUENCE [LARGE SCALE GENOMIC DNA]</scope>
    <source>
        <strain>C57BL/6J</strain>
    </source>
</reference>
<reference evidence="6" key="3">
    <citation type="journal article" date="2004" name="Genome Res.">
        <title>The status, quality, and expansion of the NIH full-length cDNA project: the Mammalian Gene Collection (MGC).</title>
        <authorList>
            <consortium name="The MGC Project Team"/>
        </authorList>
    </citation>
    <scope>NUCLEOTIDE SEQUENCE [LARGE SCALE MRNA]</scope>
</reference>
<reference evidence="5" key="4">
    <citation type="journal article" date="2015" name="PLoS ONE">
        <title>Identification and characterization of Xlr5c as a novel nuclear localization protein in mouse germ cells.</title>
        <authorList>
            <person name="Zhuang X.J."/>
            <person name="Tang W.H."/>
            <person name="Liu C.Y."/>
            <person name="Zhu J.L."/>
            <person name="Feng X."/>
            <person name="Yan J."/>
            <person name="Lian Y."/>
            <person name="Liu P."/>
            <person name="Qiao J."/>
        </authorList>
    </citation>
    <scope>SUBCELLULAR LOCATION</scope>
    <scope>TISSUE SPECIFICITY</scope>
    <scope>DEVELOPMENTAL STAGE</scope>
    <scope>IDENTIFICATION BY MASS SPECTROMETRY</scope>
</reference>